<accession>A9A9B7</accession>
<keyword id="KW-0687">Ribonucleoprotein</keyword>
<keyword id="KW-0689">Ribosomal protein</keyword>
<keyword id="KW-0694">RNA-binding</keyword>
<keyword id="KW-0699">rRNA-binding</keyword>
<sequence length="252" mass="26943">MNVKVYNLDGSEKGDIELPAVFETEYRPDLIKRAVISSLTAKLQPKGCDAFAGYRTSAKSIGKGHGKARVRRTAQGAGAFVPQAVGGRRAHPPKVEKILFERINRKERLKALASAIAASANPEIVSARGHKIEGVPSLPLVVNAEFESLAKTKEVLGVFTALKLDADLERAKDGVKIKAGRAKLRGRKYKKPKSVLVVVGDACDAVAASRNLAGVDVITANDLSAIHIAPGTMAGRLTLWTESAIEKLNGRF</sequence>
<gene>
    <name evidence="1" type="primary">rpl4</name>
    <name type="ordered locus">MmarC6_1126</name>
</gene>
<evidence type="ECO:0000255" key="1">
    <source>
        <dbReference type="HAMAP-Rule" id="MF_01328"/>
    </source>
</evidence>
<evidence type="ECO:0000305" key="2"/>
<protein>
    <recommendedName>
        <fullName evidence="1">Large ribosomal subunit protein uL4</fullName>
    </recommendedName>
    <alternativeName>
        <fullName evidence="2">50S ribosomal protein L4</fullName>
    </alternativeName>
</protein>
<organism>
    <name type="scientific">Methanococcus maripaludis (strain C6 / ATCC BAA-1332)</name>
    <dbReference type="NCBI Taxonomy" id="444158"/>
    <lineage>
        <taxon>Archaea</taxon>
        <taxon>Methanobacteriati</taxon>
        <taxon>Methanobacteriota</taxon>
        <taxon>Methanomada group</taxon>
        <taxon>Methanococci</taxon>
        <taxon>Methanococcales</taxon>
        <taxon>Methanococcaceae</taxon>
        <taxon>Methanococcus</taxon>
    </lineage>
</organism>
<dbReference type="EMBL" id="CP000867">
    <property type="protein sequence ID" value="ABX01940.1"/>
    <property type="molecule type" value="Genomic_DNA"/>
</dbReference>
<dbReference type="SMR" id="A9A9B7"/>
<dbReference type="STRING" id="444158.MmarC6_1126"/>
<dbReference type="KEGG" id="mmx:MmarC6_1126"/>
<dbReference type="eggNOG" id="arCOG04071">
    <property type="taxonomic scope" value="Archaea"/>
</dbReference>
<dbReference type="HOGENOM" id="CLU_026535_0_0_2"/>
<dbReference type="OrthoDB" id="10737at2157"/>
<dbReference type="PhylomeDB" id="A9A9B7"/>
<dbReference type="GO" id="GO:1990904">
    <property type="term" value="C:ribonucleoprotein complex"/>
    <property type="evidence" value="ECO:0007669"/>
    <property type="project" value="UniProtKB-KW"/>
</dbReference>
<dbReference type="GO" id="GO:0005840">
    <property type="term" value="C:ribosome"/>
    <property type="evidence" value="ECO:0007669"/>
    <property type="project" value="UniProtKB-KW"/>
</dbReference>
<dbReference type="GO" id="GO:0019843">
    <property type="term" value="F:rRNA binding"/>
    <property type="evidence" value="ECO:0007669"/>
    <property type="project" value="UniProtKB-UniRule"/>
</dbReference>
<dbReference type="GO" id="GO:0003735">
    <property type="term" value="F:structural constituent of ribosome"/>
    <property type="evidence" value="ECO:0007669"/>
    <property type="project" value="InterPro"/>
</dbReference>
<dbReference type="GO" id="GO:0006412">
    <property type="term" value="P:translation"/>
    <property type="evidence" value="ECO:0007669"/>
    <property type="project" value="UniProtKB-UniRule"/>
</dbReference>
<dbReference type="Gene3D" id="3.40.1370.10">
    <property type="match status" value="1"/>
</dbReference>
<dbReference type="HAMAP" id="MF_01328_A">
    <property type="entry name" value="Ribosomal_uL4_A"/>
    <property type="match status" value="1"/>
</dbReference>
<dbReference type="InterPro" id="IPR002136">
    <property type="entry name" value="Ribosomal_uL4"/>
</dbReference>
<dbReference type="InterPro" id="IPR023574">
    <property type="entry name" value="Ribosomal_uL4_dom_sf"/>
</dbReference>
<dbReference type="InterPro" id="IPR013000">
    <property type="entry name" value="Ribosomal_uL4_euk/arc_CS"/>
</dbReference>
<dbReference type="InterPro" id="IPR045240">
    <property type="entry name" value="Ribosomal_uL4_euk/arch"/>
</dbReference>
<dbReference type="InterPro" id="IPR019970">
    <property type="entry name" value="Ribosomall_uL4-arc"/>
</dbReference>
<dbReference type="NCBIfam" id="TIGR03672">
    <property type="entry name" value="rpl4p_arch"/>
    <property type="match status" value="1"/>
</dbReference>
<dbReference type="PANTHER" id="PTHR19431">
    <property type="entry name" value="60S RIBOSOMAL PROTEIN L4"/>
    <property type="match status" value="1"/>
</dbReference>
<dbReference type="Pfam" id="PF00573">
    <property type="entry name" value="Ribosomal_L4"/>
    <property type="match status" value="1"/>
</dbReference>
<dbReference type="SUPFAM" id="SSF52166">
    <property type="entry name" value="Ribosomal protein L4"/>
    <property type="match status" value="1"/>
</dbReference>
<dbReference type="PROSITE" id="PS00939">
    <property type="entry name" value="RIBOSOMAL_L1E"/>
    <property type="match status" value="1"/>
</dbReference>
<name>RL4_METM6</name>
<comment type="function">
    <text evidence="1">One of the primary rRNA binding proteins, this protein initially binds near the 5'-end of the 23S rRNA. It is important during the early stages of 50S assembly. It makes multiple contacts with different domains of the 23S rRNA in the assembled 50S subunit and ribosome.</text>
</comment>
<comment type="function">
    <text evidence="1">Forms part of the polypeptide exit tunnel.</text>
</comment>
<comment type="subunit">
    <text evidence="1">Part of the 50S ribosomal subunit.</text>
</comment>
<comment type="similarity">
    <text evidence="1">Belongs to the universal ribosomal protein uL4 family.</text>
</comment>
<feature type="chain" id="PRO_1000142151" description="Large ribosomal subunit protein uL4">
    <location>
        <begin position="1"/>
        <end position="252"/>
    </location>
</feature>
<reference key="1">
    <citation type="submission" date="2007-10" db="EMBL/GenBank/DDBJ databases">
        <title>Complete sequence of Methanococcus maripaludis C6.</title>
        <authorList>
            <consortium name="US DOE Joint Genome Institute"/>
            <person name="Copeland A."/>
            <person name="Lucas S."/>
            <person name="Lapidus A."/>
            <person name="Barry K."/>
            <person name="Glavina del Rio T."/>
            <person name="Dalin E."/>
            <person name="Tice H."/>
            <person name="Pitluck S."/>
            <person name="Clum A."/>
            <person name="Schmutz J."/>
            <person name="Larimer F."/>
            <person name="Land M."/>
            <person name="Hauser L."/>
            <person name="Kyrpides N."/>
            <person name="Mikhailova N."/>
            <person name="Sieprawska-Lupa M."/>
            <person name="Whitman W.B."/>
            <person name="Richardson P."/>
        </authorList>
    </citation>
    <scope>NUCLEOTIDE SEQUENCE [LARGE SCALE GENOMIC DNA]</scope>
    <source>
        <strain>C6 / ATCC BAA-1332</strain>
    </source>
</reference>
<proteinExistence type="inferred from homology"/>